<evidence type="ECO:0000255" key="1">
    <source>
        <dbReference type="HAMAP-Rule" id="MF_00116"/>
    </source>
</evidence>
<evidence type="ECO:0000256" key="2">
    <source>
        <dbReference type="SAM" id="MobiDB-lite"/>
    </source>
</evidence>
<sequence length="160" mass="16939">MTMPPPRPPRILVKRLAHAEGLALPAYQTAGAAGLDLAAALPHGTTLVLEPGGRHLLPTGFCLEIPEGYEAQVRPRSGLARKHGVTVLNTPGTIDADYRGEIGVILINMGDEPFEIVRGTRIAQLVVAPCVQAELIETHTLSDTERGEDGFGSTGHGSHQ</sequence>
<dbReference type="EC" id="3.6.1.23" evidence="1"/>
<dbReference type="EMBL" id="CP001016">
    <property type="protein sequence ID" value="ACB96479.1"/>
    <property type="molecule type" value="Genomic_DNA"/>
</dbReference>
<dbReference type="RefSeq" id="WP_012385830.1">
    <property type="nucleotide sequence ID" value="NC_010581.1"/>
</dbReference>
<dbReference type="SMR" id="B2IKJ9"/>
<dbReference type="STRING" id="395963.Bind_2911"/>
<dbReference type="KEGG" id="bid:Bind_2911"/>
<dbReference type="eggNOG" id="COG0756">
    <property type="taxonomic scope" value="Bacteria"/>
</dbReference>
<dbReference type="HOGENOM" id="CLU_068508_1_2_5"/>
<dbReference type="OrthoDB" id="9809956at2"/>
<dbReference type="UniPathway" id="UPA00610">
    <property type="reaction ID" value="UER00666"/>
</dbReference>
<dbReference type="Proteomes" id="UP000001695">
    <property type="component" value="Chromosome"/>
</dbReference>
<dbReference type="GO" id="GO:0004170">
    <property type="term" value="F:dUTP diphosphatase activity"/>
    <property type="evidence" value="ECO:0007669"/>
    <property type="project" value="UniProtKB-UniRule"/>
</dbReference>
<dbReference type="GO" id="GO:0000287">
    <property type="term" value="F:magnesium ion binding"/>
    <property type="evidence" value="ECO:0007669"/>
    <property type="project" value="UniProtKB-UniRule"/>
</dbReference>
<dbReference type="GO" id="GO:0006226">
    <property type="term" value="P:dUMP biosynthetic process"/>
    <property type="evidence" value="ECO:0007669"/>
    <property type="project" value="UniProtKB-UniRule"/>
</dbReference>
<dbReference type="GO" id="GO:0046081">
    <property type="term" value="P:dUTP catabolic process"/>
    <property type="evidence" value="ECO:0007669"/>
    <property type="project" value="InterPro"/>
</dbReference>
<dbReference type="CDD" id="cd07557">
    <property type="entry name" value="trimeric_dUTPase"/>
    <property type="match status" value="1"/>
</dbReference>
<dbReference type="Gene3D" id="2.70.40.10">
    <property type="match status" value="1"/>
</dbReference>
<dbReference type="HAMAP" id="MF_00116">
    <property type="entry name" value="dUTPase_bact"/>
    <property type="match status" value="1"/>
</dbReference>
<dbReference type="InterPro" id="IPR008181">
    <property type="entry name" value="dUTPase"/>
</dbReference>
<dbReference type="InterPro" id="IPR029054">
    <property type="entry name" value="dUTPase-like"/>
</dbReference>
<dbReference type="InterPro" id="IPR036157">
    <property type="entry name" value="dUTPase-like_sf"/>
</dbReference>
<dbReference type="InterPro" id="IPR033704">
    <property type="entry name" value="dUTPase_trimeric"/>
</dbReference>
<dbReference type="NCBIfam" id="TIGR00576">
    <property type="entry name" value="dut"/>
    <property type="match status" value="1"/>
</dbReference>
<dbReference type="NCBIfam" id="NF001862">
    <property type="entry name" value="PRK00601.1"/>
    <property type="match status" value="1"/>
</dbReference>
<dbReference type="PANTHER" id="PTHR11241">
    <property type="entry name" value="DEOXYURIDINE 5'-TRIPHOSPHATE NUCLEOTIDOHYDROLASE"/>
    <property type="match status" value="1"/>
</dbReference>
<dbReference type="PANTHER" id="PTHR11241:SF0">
    <property type="entry name" value="DEOXYURIDINE 5'-TRIPHOSPHATE NUCLEOTIDOHYDROLASE"/>
    <property type="match status" value="1"/>
</dbReference>
<dbReference type="Pfam" id="PF00692">
    <property type="entry name" value="dUTPase"/>
    <property type="match status" value="1"/>
</dbReference>
<dbReference type="SUPFAM" id="SSF51283">
    <property type="entry name" value="dUTPase-like"/>
    <property type="match status" value="1"/>
</dbReference>
<name>DUT_BEII9</name>
<comment type="function">
    <text evidence="1">This enzyme is involved in nucleotide metabolism: it produces dUMP, the immediate precursor of thymidine nucleotides and it decreases the intracellular concentration of dUTP so that uracil cannot be incorporated into DNA.</text>
</comment>
<comment type="catalytic activity">
    <reaction evidence="1">
        <text>dUTP + H2O = dUMP + diphosphate + H(+)</text>
        <dbReference type="Rhea" id="RHEA:10248"/>
        <dbReference type="ChEBI" id="CHEBI:15377"/>
        <dbReference type="ChEBI" id="CHEBI:15378"/>
        <dbReference type="ChEBI" id="CHEBI:33019"/>
        <dbReference type="ChEBI" id="CHEBI:61555"/>
        <dbReference type="ChEBI" id="CHEBI:246422"/>
        <dbReference type="EC" id="3.6.1.23"/>
    </reaction>
</comment>
<comment type="cofactor">
    <cofactor evidence="1">
        <name>Mg(2+)</name>
        <dbReference type="ChEBI" id="CHEBI:18420"/>
    </cofactor>
</comment>
<comment type="pathway">
    <text evidence="1">Pyrimidine metabolism; dUMP biosynthesis; dUMP from dCTP (dUTP route): step 2/2.</text>
</comment>
<comment type="similarity">
    <text evidence="1">Belongs to the dUTPase family.</text>
</comment>
<gene>
    <name evidence="1" type="primary">dut</name>
    <name type="ordered locus">Bind_2911</name>
</gene>
<accession>B2IKJ9</accession>
<feature type="chain" id="PRO_1000119225" description="Deoxyuridine 5'-triphosphate nucleotidohydrolase">
    <location>
        <begin position="1"/>
        <end position="160"/>
    </location>
</feature>
<feature type="region of interest" description="Disordered" evidence="2">
    <location>
        <begin position="139"/>
        <end position="160"/>
    </location>
</feature>
<feature type="compositionally biased region" description="Basic and acidic residues" evidence="2">
    <location>
        <begin position="139"/>
        <end position="149"/>
    </location>
</feature>
<feature type="compositionally biased region" description="Gly residues" evidence="2">
    <location>
        <begin position="150"/>
        <end position="160"/>
    </location>
</feature>
<feature type="binding site" evidence="1">
    <location>
        <begin position="76"/>
        <end position="78"/>
    </location>
    <ligand>
        <name>substrate</name>
    </ligand>
</feature>
<feature type="binding site" evidence="1">
    <location>
        <position position="89"/>
    </location>
    <ligand>
        <name>substrate</name>
    </ligand>
</feature>
<feature type="binding site" evidence="1">
    <location>
        <begin position="93"/>
        <end position="95"/>
    </location>
    <ligand>
        <name>substrate</name>
    </ligand>
</feature>
<protein>
    <recommendedName>
        <fullName evidence="1">Deoxyuridine 5'-triphosphate nucleotidohydrolase</fullName>
        <shortName evidence="1">dUTPase</shortName>
        <ecNumber evidence="1">3.6.1.23</ecNumber>
    </recommendedName>
    <alternativeName>
        <fullName evidence="1">dUTP pyrophosphatase</fullName>
    </alternativeName>
</protein>
<keyword id="KW-0378">Hydrolase</keyword>
<keyword id="KW-0460">Magnesium</keyword>
<keyword id="KW-0479">Metal-binding</keyword>
<keyword id="KW-0546">Nucleotide metabolism</keyword>
<keyword id="KW-1185">Reference proteome</keyword>
<reference key="1">
    <citation type="journal article" date="2010" name="J. Bacteriol.">
        <title>Complete genome sequence of Beijerinckia indica subsp. indica.</title>
        <authorList>
            <person name="Tamas I."/>
            <person name="Dedysh S.N."/>
            <person name="Liesack W."/>
            <person name="Stott M.B."/>
            <person name="Alam M."/>
            <person name="Murrell J.C."/>
            <person name="Dunfield P.F."/>
        </authorList>
    </citation>
    <scope>NUCLEOTIDE SEQUENCE [LARGE SCALE GENOMIC DNA]</scope>
    <source>
        <strain>ATCC 9039 / DSM 1715 / NCIMB 8712</strain>
    </source>
</reference>
<proteinExistence type="inferred from homology"/>
<organism>
    <name type="scientific">Beijerinckia indica subsp. indica (strain ATCC 9039 / DSM 1715 / NCIMB 8712)</name>
    <dbReference type="NCBI Taxonomy" id="395963"/>
    <lineage>
        <taxon>Bacteria</taxon>
        <taxon>Pseudomonadati</taxon>
        <taxon>Pseudomonadota</taxon>
        <taxon>Alphaproteobacteria</taxon>
        <taxon>Hyphomicrobiales</taxon>
        <taxon>Beijerinckiaceae</taxon>
        <taxon>Beijerinckia</taxon>
    </lineage>
</organism>